<gene>
    <name evidence="1" type="primary">rplB</name>
    <name type="ordered locus">RPR_06215</name>
</gene>
<name>RL2_RICPU</name>
<evidence type="ECO:0000255" key="1">
    <source>
        <dbReference type="HAMAP-Rule" id="MF_01320"/>
    </source>
</evidence>
<evidence type="ECO:0000256" key="2">
    <source>
        <dbReference type="SAM" id="MobiDB-lite"/>
    </source>
</evidence>
<evidence type="ECO:0000305" key="3"/>
<reference key="1">
    <citation type="journal article" date="2009" name="PLoS ONE">
        <title>Genome sequence of the endosymbiont Rickettsia peacockii and comparison with virulent Rickettsia rickettsii: identification of virulence factors.</title>
        <authorList>
            <person name="Felsheim R.F."/>
            <person name="Kurtti T.J."/>
            <person name="Munderloh U.G."/>
        </authorList>
    </citation>
    <scope>NUCLEOTIDE SEQUENCE [LARGE SCALE GENOMIC DNA]</scope>
    <source>
        <strain>Rustic</strain>
    </source>
</reference>
<dbReference type="EMBL" id="CP001227">
    <property type="protein sequence ID" value="ACR47773.1"/>
    <property type="molecule type" value="Genomic_DNA"/>
</dbReference>
<dbReference type="RefSeq" id="WP_012736944.1">
    <property type="nucleotide sequence ID" value="NC_012730.1"/>
</dbReference>
<dbReference type="SMR" id="C4K2H6"/>
<dbReference type="KEGG" id="rpk:RPR_06215"/>
<dbReference type="HOGENOM" id="CLU_036235_2_1_5"/>
<dbReference type="Proteomes" id="UP000005015">
    <property type="component" value="Chromosome"/>
</dbReference>
<dbReference type="GO" id="GO:0015934">
    <property type="term" value="C:large ribosomal subunit"/>
    <property type="evidence" value="ECO:0007669"/>
    <property type="project" value="InterPro"/>
</dbReference>
<dbReference type="GO" id="GO:0019843">
    <property type="term" value="F:rRNA binding"/>
    <property type="evidence" value="ECO:0007669"/>
    <property type="project" value="UniProtKB-UniRule"/>
</dbReference>
<dbReference type="GO" id="GO:0003735">
    <property type="term" value="F:structural constituent of ribosome"/>
    <property type="evidence" value="ECO:0007669"/>
    <property type="project" value="InterPro"/>
</dbReference>
<dbReference type="GO" id="GO:0016740">
    <property type="term" value="F:transferase activity"/>
    <property type="evidence" value="ECO:0007669"/>
    <property type="project" value="InterPro"/>
</dbReference>
<dbReference type="GO" id="GO:0006412">
    <property type="term" value="P:translation"/>
    <property type="evidence" value="ECO:0007669"/>
    <property type="project" value="UniProtKB-UniRule"/>
</dbReference>
<dbReference type="FunFam" id="2.30.30.30:FF:000001">
    <property type="entry name" value="50S ribosomal protein L2"/>
    <property type="match status" value="1"/>
</dbReference>
<dbReference type="FunFam" id="2.40.50.140:FF:000003">
    <property type="entry name" value="50S ribosomal protein L2"/>
    <property type="match status" value="1"/>
</dbReference>
<dbReference type="FunFam" id="4.10.950.10:FF:000001">
    <property type="entry name" value="50S ribosomal protein L2"/>
    <property type="match status" value="1"/>
</dbReference>
<dbReference type="Gene3D" id="2.30.30.30">
    <property type="match status" value="1"/>
</dbReference>
<dbReference type="Gene3D" id="2.40.50.140">
    <property type="entry name" value="Nucleic acid-binding proteins"/>
    <property type="match status" value="1"/>
</dbReference>
<dbReference type="Gene3D" id="4.10.950.10">
    <property type="entry name" value="Ribosomal protein L2, domain 3"/>
    <property type="match status" value="1"/>
</dbReference>
<dbReference type="HAMAP" id="MF_01320_B">
    <property type="entry name" value="Ribosomal_uL2_B"/>
    <property type="match status" value="1"/>
</dbReference>
<dbReference type="InterPro" id="IPR012340">
    <property type="entry name" value="NA-bd_OB-fold"/>
</dbReference>
<dbReference type="InterPro" id="IPR014722">
    <property type="entry name" value="Rib_uL2_dom2"/>
</dbReference>
<dbReference type="InterPro" id="IPR002171">
    <property type="entry name" value="Ribosomal_uL2"/>
</dbReference>
<dbReference type="InterPro" id="IPR005880">
    <property type="entry name" value="Ribosomal_uL2_bac/org-type"/>
</dbReference>
<dbReference type="InterPro" id="IPR022669">
    <property type="entry name" value="Ribosomal_uL2_C"/>
</dbReference>
<dbReference type="InterPro" id="IPR022671">
    <property type="entry name" value="Ribosomal_uL2_CS"/>
</dbReference>
<dbReference type="InterPro" id="IPR014726">
    <property type="entry name" value="Ribosomal_uL2_dom3"/>
</dbReference>
<dbReference type="InterPro" id="IPR022666">
    <property type="entry name" value="Ribosomal_uL2_RNA-bd_dom"/>
</dbReference>
<dbReference type="InterPro" id="IPR008991">
    <property type="entry name" value="Translation_prot_SH3-like_sf"/>
</dbReference>
<dbReference type="NCBIfam" id="TIGR01171">
    <property type="entry name" value="rplB_bact"/>
    <property type="match status" value="1"/>
</dbReference>
<dbReference type="PANTHER" id="PTHR13691:SF5">
    <property type="entry name" value="LARGE RIBOSOMAL SUBUNIT PROTEIN UL2M"/>
    <property type="match status" value="1"/>
</dbReference>
<dbReference type="PANTHER" id="PTHR13691">
    <property type="entry name" value="RIBOSOMAL PROTEIN L2"/>
    <property type="match status" value="1"/>
</dbReference>
<dbReference type="Pfam" id="PF00181">
    <property type="entry name" value="Ribosomal_L2"/>
    <property type="match status" value="1"/>
</dbReference>
<dbReference type="Pfam" id="PF03947">
    <property type="entry name" value="Ribosomal_L2_C"/>
    <property type="match status" value="1"/>
</dbReference>
<dbReference type="PIRSF" id="PIRSF002158">
    <property type="entry name" value="Ribosomal_L2"/>
    <property type="match status" value="1"/>
</dbReference>
<dbReference type="SMART" id="SM01383">
    <property type="entry name" value="Ribosomal_L2"/>
    <property type="match status" value="1"/>
</dbReference>
<dbReference type="SMART" id="SM01382">
    <property type="entry name" value="Ribosomal_L2_C"/>
    <property type="match status" value="1"/>
</dbReference>
<dbReference type="SUPFAM" id="SSF50249">
    <property type="entry name" value="Nucleic acid-binding proteins"/>
    <property type="match status" value="1"/>
</dbReference>
<dbReference type="SUPFAM" id="SSF50104">
    <property type="entry name" value="Translation proteins SH3-like domain"/>
    <property type="match status" value="1"/>
</dbReference>
<dbReference type="PROSITE" id="PS00467">
    <property type="entry name" value="RIBOSOMAL_L2"/>
    <property type="match status" value="1"/>
</dbReference>
<organism>
    <name type="scientific">Rickettsia peacockii (strain Rustic)</name>
    <dbReference type="NCBI Taxonomy" id="562019"/>
    <lineage>
        <taxon>Bacteria</taxon>
        <taxon>Pseudomonadati</taxon>
        <taxon>Pseudomonadota</taxon>
        <taxon>Alphaproteobacteria</taxon>
        <taxon>Rickettsiales</taxon>
        <taxon>Rickettsiaceae</taxon>
        <taxon>Rickettsieae</taxon>
        <taxon>Rickettsia</taxon>
        <taxon>spotted fever group</taxon>
    </lineage>
</organism>
<accession>C4K2H6</accession>
<comment type="function">
    <text evidence="1">One of the primary rRNA binding proteins. Required for association of the 30S and 50S subunits to form the 70S ribosome, for tRNA binding and peptide bond formation. It has been suggested to have peptidyltransferase activity; this is somewhat controversial. Makes several contacts with the 16S rRNA in the 70S ribosome.</text>
</comment>
<comment type="subunit">
    <text evidence="1">Part of the 50S ribosomal subunit. Forms a bridge to the 30S subunit in the 70S ribosome.</text>
</comment>
<comment type="similarity">
    <text evidence="1">Belongs to the universal ribosomal protein uL2 family.</text>
</comment>
<keyword id="KW-0687">Ribonucleoprotein</keyword>
<keyword id="KW-0689">Ribosomal protein</keyword>
<keyword id="KW-0694">RNA-binding</keyword>
<keyword id="KW-0699">rRNA-binding</keyword>
<sequence>MALKNFNPITPSLRELVQVDKTSLWKGRPLKSLTKGISKTGGRNNQGKITSWHRGGGHKKLYRIIDFKRNKIDVSAIVERIEYDPNRTAFIALIKYEDGEYSYILAPQKLSVGDRVISSQDADIKIGNCLPLKCIPIGTTLHNVEMKVGKGGQIARSAGTSVDLVGKDSGYAQIKLRSGEFRLVPLDCKATIGSISNPDQKNINLGKAGRNRWLGWRPHVRGVAMNPVDHPHGGGEGKTSGGRHPVTPWGFPTKGKKTRKNKRTSKFIVKKRK</sequence>
<proteinExistence type="inferred from homology"/>
<protein>
    <recommendedName>
        <fullName evidence="1">Large ribosomal subunit protein uL2</fullName>
    </recommendedName>
    <alternativeName>
        <fullName evidence="3">50S ribosomal protein L2</fullName>
    </alternativeName>
</protein>
<feature type="chain" id="PRO_1000214458" description="Large ribosomal subunit protein uL2">
    <location>
        <begin position="1"/>
        <end position="273"/>
    </location>
</feature>
<feature type="region of interest" description="Disordered" evidence="2">
    <location>
        <begin position="228"/>
        <end position="273"/>
    </location>
</feature>
<feature type="compositionally biased region" description="Basic residues" evidence="2">
    <location>
        <begin position="254"/>
        <end position="273"/>
    </location>
</feature>